<name>KDPC_SYNY3</name>
<reference key="1">
    <citation type="journal article" date="1996" name="DNA Res.">
        <title>Sequence analysis of the genome of the unicellular cyanobacterium Synechocystis sp. strain PCC6803. II. Sequence determination of the entire genome and assignment of potential protein-coding regions.</title>
        <authorList>
            <person name="Kaneko T."/>
            <person name="Sato S."/>
            <person name="Kotani H."/>
            <person name="Tanaka A."/>
            <person name="Asamizu E."/>
            <person name="Nakamura Y."/>
            <person name="Miyajima N."/>
            <person name="Hirosawa M."/>
            <person name="Sugiura M."/>
            <person name="Sasamoto S."/>
            <person name="Kimura T."/>
            <person name="Hosouchi T."/>
            <person name="Matsuno A."/>
            <person name="Muraki A."/>
            <person name="Nakazaki N."/>
            <person name="Naruo K."/>
            <person name="Okumura S."/>
            <person name="Shimpo S."/>
            <person name="Takeuchi C."/>
            <person name="Wada T."/>
            <person name="Watanabe A."/>
            <person name="Yamada M."/>
            <person name="Yasuda M."/>
            <person name="Tabata S."/>
        </authorList>
    </citation>
    <scope>NUCLEOTIDE SEQUENCE [LARGE SCALE GENOMIC DNA]</scope>
    <source>
        <strain>ATCC 27184 / PCC 6803 / Kazusa</strain>
    </source>
</reference>
<accession>P73869</accession>
<evidence type="ECO:0000255" key="1">
    <source>
        <dbReference type="HAMAP-Rule" id="MF_00276"/>
    </source>
</evidence>
<comment type="function">
    <text evidence="1">Part of the high-affinity ATP-driven potassium transport (or Kdp) system, which catalyzes the hydrolysis of ATP coupled with the electrogenic transport of potassium into the cytoplasm. This subunit acts as a catalytic chaperone that increases the ATP-binding affinity of the ATP-hydrolyzing subunit KdpB by the formation of a transient KdpB/KdpC/ATP ternary complex.</text>
</comment>
<comment type="subunit">
    <text evidence="1">The system is composed of three essential subunits: KdpA, KdpB and KdpC.</text>
</comment>
<comment type="subcellular location">
    <subcellularLocation>
        <location evidence="1">Cell inner membrane</location>
        <topology evidence="1">Single-pass membrane protein</topology>
    </subcellularLocation>
</comment>
<comment type="similarity">
    <text evidence="1">Belongs to the KdpC family.</text>
</comment>
<protein>
    <recommendedName>
        <fullName evidence="1">Potassium-transporting ATPase KdpC subunit</fullName>
    </recommendedName>
    <alternativeName>
        <fullName evidence="1">ATP phosphohydrolase [potassium-transporting] C chain</fullName>
    </alternativeName>
    <alternativeName>
        <fullName evidence="1">Potassium-binding and translocating subunit C</fullName>
    </alternativeName>
    <alternativeName>
        <fullName evidence="1">Potassium-translocating ATPase C chain</fullName>
    </alternativeName>
</protein>
<proteinExistence type="inferred from homology"/>
<organism>
    <name type="scientific">Synechocystis sp. (strain ATCC 27184 / PCC 6803 / Kazusa)</name>
    <dbReference type="NCBI Taxonomy" id="1111708"/>
    <lineage>
        <taxon>Bacteria</taxon>
        <taxon>Bacillati</taxon>
        <taxon>Cyanobacteriota</taxon>
        <taxon>Cyanophyceae</taxon>
        <taxon>Synechococcales</taxon>
        <taxon>Merismopediaceae</taxon>
        <taxon>Synechocystis</taxon>
    </lineage>
</organism>
<gene>
    <name evidence="1" type="primary">kdpC</name>
    <name type="ordered locus">slr1730</name>
</gene>
<keyword id="KW-0067">ATP-binding</keyword>
<keyword id="KW-0997">Cell inner membrane</keyword>
<keyword id="KW-1003">Cell membrane</keyword>
<keyword id="KW-0406">Ion transport</keyword>
<keyword id="KW-0472">Membrane</keyword>
<keyword id="KW-0547">Nucleotide-binding</keyword>
<keyword id="KW-0630">Potassium</keyword>
<keyword id="KW-0633">Potassium transport</keyword>
<keyword id="KW-1185">Reference proteome</keyword>
<keyword id="KW-0812">Transmembrane</keyword>
<keyword id="KW-1133">Transmembrane helix</keyword>
<keyword id="KW-0813">Transport</keyword>
<feature type="chain" id="PRO_0000197020" description="Potassium-transporting ATPase KdpC subunit">
    <location>
        <begin position="1"/>
        <end position="190"/>
    </location>
</feature>
<feature type="transmembrane region" description="Helical" evidence="1">
    <location>
        <begin position="15"/>
        <end position="35"/>
    </location>
</feature>
<sequence>MIRNFVISLRSTALLWILTALIYPAIVLVIGQLVFPYQANGSLITDSQGQVVGSALIGQTFTEEGYFWSRPSAINYSEGADASPTGISGASNLAPSNPDLLSRIEAEAQRLEDNAVQPTADLLYSSGSGLDPHISPAAAQAQFDRVAKARSIPPQELQSLITKHTEGRFLGIFGEPGVNVLTLNLALDNR</sequence>
<dbReference type="EMBL" id="BA000022">
    <property type="protein sequence ID" value="BAA17931.1"/>
    <property type="molecule type" value="Genomic_DNA"/>
</dbReference>
<dbReference type="PIR" id="S75069">
    <property type="entry name" value="S75069"/>
</dbReference>
<dbReference type="SMR" id="P73869"/>
<dbReference type="STRING" id="1148.gene:10498800"/>
<dbReference type="PaxDb" id="1148-1653014"/>
<dbReference type="EnsemblBacteria" id="BAA17931">
    <property type="protein sequence ID" value="BAA17931"/>
    <property type="gene ID" value="BAA17931"/>
</dbReference>
<dbReference type="KEGG" id="syn:slr1730"/>
<dbReference type="eggNOG" id="COG2156">
    <property type="taxonomic scope" value="Bacteria"/>
</dbReference>
<dbReference type="InParanoid" id="P73869"/>
<dbReference type="PhylomeDB" id="P73869"/>
<dbReference type="Proteomes" id="UP000001425">
    <property type="component" value="Chromosome"/>
</dbReference>
<dbReference type="GO" id="GO:0005886">
    <property type="term" value="C:plasma membrane"/>
    <property type="evidence" value="ECO:0007669"/>
    <property type="project" value="UniProtKB-SubCell"/>
</dbReference>
<dbReference type="GO" id="GO:0005524">
    <property type="term" value="F:ATP binding"/>
    <property type="evidence" value="ECO:0007669"/>
    <property type="project" value="UniProtKB-UniRule"/>
</dbReference>
<dbReference type="GO" id="GO:0008556">
    <property type="term" value="F:P-type potassium transmembrane transporter activity"/>
    <property type="evidence" value="ECO:0000318"/>
    <property type="project" value="GO_Central"/>
</dbReference>
<dbReference type="GO" id="GO:0071805">
    <property type="term" value="P:potassium ion transmembrane transport"/>
    <property type="evidence" value="ECO:0000318"/>
    <property type="project" value="GO_Central"/>
</dbReference>
<dbReference type="HAMAP" id="MF_00276">
    <property type="entry name" value="KdpC"/>
    <property type="match status" value="1"/>
</dbReference>
<dbReference type="InterPro" id="IPR003820">
    <property type="entry name" value="KdpC"/>
</dbReference>
<dbReference type="NCBIfam" id="TIGR00681">
    <property type="entry name" value="kdpC"/>
    <property type="match status" value="1"/>
</dbReference>
<dbReference type="NCBIfam" id="NF001454">
    <property type="entry name" value="PRK00315.1"/>
    <property type="match status" value="1"/>
</dbReference>
<dbReference type="NCBIfam" id="NF010607">
    <property type="entry name" value="PRK14003.1"/>
    <property type="match status" value="1"/>
</dbReference>
<dbReference type="PANTHER" id="PTHR30042">
    <property type="entry name" value="POTASSIUM-TRANSPORTING ATPASE C CHAIN"/>
    <property type="match status" value="1"/>
</dbReference>
<dbReference type="PANTHER" id="PTHR30042:SF2">
    <property type="entry name" value="POTASSIUM-TRANSPORTING ATPASE KDPC SUBUNIT"/>
    <property type="match status" value="1"/>
</dbReference>
<dbReference type="Pfam" id="PF02669">
    <property type="entry name" value="KdpC"/>
    <property type="match status" value="1"/>
</dbReference>
<dbReference type="PIRSF" id="PIRSF001296">
    <property type="entry name" value="K_ATPase_KdpC"/>
    <property type="match status" value="1"/>
</dbReference>